<name>BMPER_MOUSE</name>
<keyword id="KW-1015">Disulfide bond</keyword>
<keyword id="KW-0325">Glycoprotein</keyword>
<keyword id="KW-1185">Reference proteome</keyword>
<keyword id="KW-0677">Repeat</keyword>
<keyword id="KW-0964">Secreted</keyword>
<keyword id="KW-0732">Signal</keyword>
<protein>
    <recommendedName>
        <fullName>BMP-binding endothelial regulator protein</fullName>
    </recommendedName>
    <alternativeName>
        <fullName>Bone morphogenetic protein-binding endothelial cell precursor-derived regulator</fullName>
    </alternativeName>
    <alternativeName>
        <fullName>Protein crossveinless-2</fullName>
        <shortName>mCV2</shortName>
    </alternativeName>
</protein>
<comment type="function">
    <text evidence="1">Inhibitor of bone morphogenetic protein (BMP) function, it may regulate BMP responsiveness of osteoblasts and chondrocytes.</text>
</comment>
<comment type="subunit">
    <text evidence="5">Interacts with BMP4.</text>
</comment>
<comment type="subcellular location">
    <subcellularLocation>
        <location evidence="6">Secreted</location>
    </subcellularLocation>
</comment>
<comment type="developmental stage">
    <text evidence="6">At 9.0 dpc, expressed in the ventral tail bud and also in the closing anterior neuropore and in the roof of the neural tube, at 10.5 dpc, also expressed in mesonephric ridge.</text>
</comment>
<proteinExistence type="evidence at protein level"/>
<feature type="signal peptide" evidence="2">
    <location>
        <begin position="1"/>
        <end position="39"/>
    </location>
</feature>
<feature type="chain" id="PRO_0000020821" description="BMP-binding endothelial regulator protein">
    <location>
        <begin position="40"/>
        <end position="685"/>
    </location>
</feature>
<feature type="domain" description="VWFC 1" evidence="3">
    <location>
        <begin position="50"/>
        <end position="105"/>
    </location>
</feature>
<feature type="domain" description="VWFC 2" evidence="3">
    <location>
        <begin position="108"/>
        <end position="163"/>
    </location>
</feature>
<feature type="domain" description="VWFC 3" evidence="3">
    <location>
        <begin position="164"/>
        <end position="225"/>
    </location>
</feature>
<feature type="domain" description="VWFC 4" evidence="3">
    <location>
        <begin position="238"/>
        <end position="289"/>
    </location>
</feature>
<feature type="domain" description="VWFC 5" evidence="3">
    <location>
        <begin position="299"/>
        <end position="358"/>
    </location>
</feature>
<feature type="domain" description="VWFD" evidence="4">
    <location>
        <begin position="362"/>
        <end position="535"/>
    </location>
</feature>
<feature type="domain" description="TIL">
    <location>
        <begin position="629"/>
        <end position="682"/>
    </location>
</feature>
<feature type="glycosylation site" description="N-linked (GlcNAc...) asparagine" evidence="2">
    <location>
        <position position="30"/>
    </location>
</feature>
<feature type="glycosylation site" description="N-linked (GlcNAc...) asparagine" evidence="2">
    <location>
        <position position="116"/>
    </location>
</feature>
<feature type="glycosylation site" description="N-linked (GlcNAc...) asparagine" evidence="2">
    <location>
        <position position="255"/>
    </location>
</feature>
<feature type="glycosylation site" description="N-linked (GlcNAc...) asparagine" evidence="2">
    <location>
        <position position="318"/>
    </location>
</feature>
<feature type="glycosylation site" description="N-linked (GlcNAc...) asparagine" evidence="2">
    <location>
        <position position="441"/>
    </location>
</feature>
<feature type="disulfide bond" evidence="4">
    <location>
        <begin position="364"/>
        <end position="497"/>
    </location>
</feature>
<feature type="disulfide bond" evidence="4">
    <location>
        <begin position="386"/>
        <end position="534"/>
    </location>
</feature>
<feature type="sequence conflict" description="In Ref. 3; AAH66153." evidence="7" ref="3">
    <original>N</original>
    <variation>K</variation>
    <location>
        <position position="151"/>
    </location>
</feature>
<feature type="sequence conflict" description="In Ref. 4; BAB29213." evidence="7" ref="4">
    <original>CLGQRKVFDLPF</original>
    <variation>MFGSEKSIRPSL</variation>
    <location>
        <begin position="224"/>
        <end position="235"/>
    </location>
</feature>
<feature type="sequence conflict" description="In Ref. 2; AAP88382." evidence="7" ref="2">
    <original>R</original>
    <variation>G</variation>
    <location>
        <position position="350"/>
    </location>
</feature>
<dbReference type="EMBL" id="AF454954">
    <property type="protein sequence ID" value="AAN45857.1"/>
    <property type="molecule type" value="mRNA"/>
</dbReference>
<dbReference type="EMBL" id="AY263358">
    <property type="protein sequence ID" value="AAP88382.1"/>
    <property type="molecule type" value="mRNA"/>
</dbReference>
<dbReference type="EMBL" id="BC042718">
    <property type="protein sequence ID" value="AAH42718.1"/>
    <property type="molecule type" value="mRNA"/>
</dbReference>
<dbReference type="EMBL" id="BC066153">
    <property type="protein sequence ID" value="AAH66153.1"/>
    <property type="molecule type" value="mRNA"/>
</dbReference>
<dbReference type="EMBL" id="AK014221">
    <property type="protein sequence ID" value="BAB29213.1"/>
    <property type="molecule type" value="mRNA"/>
</dbReference>
<dbReference type="CCDS" id="CCDS22929.1"/>
<dbReference type="RefSeq" id="NP_082748.1">
    <property type="nucleotide sequence ID" value="NM_028472.2"/>
</dbReference>
<dbReference type="SMR" id="Q8CJ69"/>
<dbReference type="BioGRID" id="215850">
    <property type="interactions" value="4"/>
</dbReference>
<dbReference type="FunCoup" id="Q8CJ69">
    <property type="interactions" value="233"/>
</dbReference>
<dbReference type="STRING" id="10090.ENSMUSP00000071872"/>
<dbReference type="GlyCosmos" id="Q8CJ69">
    <property type="glycosylation" value="5 sites, No reported glycans"/>
</dbReference>
<dbReference type="GlyGen" id="Q8CJ69">
    <property type="glycosylation" value="5 sites, 1 N-linked glycan (1 site)"/>
</dbReference>
<dbReference type="PhosphoSitePlus" id="Q8CJ69"/>
<dbReference type="PaxDb" id="10090-ENSMUSP00000071872"/>
<dbReference type="ProteomicsDB" id="265313"/>
<dbReference type="Antibodypedia" id="12854">
    <property type="antibodies" value="169 antibodies from 23 providers"/>
</dbReference>
<dbReference type="DNASU" id="73230"/>
<dbReference type="Ensembl" id="ENSMUST00000071982.7">
    <property type="protein sequence ID" value="ENSMUSP00000071872.6"/>
    <property type="gene ID" value="ENSMUSG00000031963.9"/>
</dbReference>
<dbReference type="GeneID" id="73230"/>
<dbReference type="KEGG" id="mmu:73230"/>
<dbReference type="UCSC" id="uc009oow.2">
    <property type="organism name" value="mouse"/>
</dbReference>
<dbReference type="AGR" id="MGI:1920480"/>
<dbReference type="CTD" id="168667"/>
<dbReference type="MGI" id="MGI:1920480">
    <property type="gene designation" value="Bmper"/>
</dbReference>
<dbReference type="VEuPathDB" id="HostDB:ENSMUSG00000031963"/>
<dbReference type="eggNOG" id="KOG1216">
    <property type="taxonomic scope" value="Eukaryota"/>
</dbReference>
<dbReference type="GeneTree" id="ENSGT00940000156485"/>
<dbReference type="HOGENOM" id="CLU_018024_2_0_1"/>
<dbReference type="InParanoid" id="Q8CJ69"/>
<dbReference type="OMA" id="WHFANSW"/>
<dbReference type="OrthoDB" id="6019304at2759"/>
<dbReference type="PhylomeDB" id="Q8CJ69"/>
<dbReference type="TreeFam" id="TF343473"/>
<dbReference type="BioGRID-ORCS" id="73230">
    <property type="hits" value="1 hit in 76 CRISPR screens"/>
</dbReference>
<dbReference type="ChiTaRS" id="Bmper">
    <property type="organism name" value="mouse"/>
</dbReference>
<dbReference type="PRO" id="PR:Q8CJ69"/>
<dbReference type="Proteomes" id="UP000000589">
    <property type="component" value="Chromosome 9"/>
</dbReference>
<dbReference type="RNAct" id="Q8CJ69">
    <property type="molecule type" value="protein"/>
</dbReference>
<dbReference type="Bgee" id="ENSMUSG00000031963">
    <property type="expression patterns" value="Expressed in metanephric mesenchyme and 218 other cell types or tissues"/>
</dbReference>
<dbReference type="ExpressionAtlas" id="Q8CJ69">
    <property type="expression patterns" value="baseline and differential"/>
</dbReference>
<dbReference type="GO" id="GO:0062023">
    <property type="term" value="C:collagen-containing extracellular matrix"/>
    <property type="evidence" value="ECO:0007005"/>
    <property type="project" value="BHF-UCL"/>
</dbReference>
<dbReference type="GO" id="GO:0005576">
    <property type="term" value="C:extracellular region"/>
    <property type="evidence" value="ECO:0000314"/>
    <property type="project" value="MGI"/>
</dbReference>
<dbReference type="GO" id="GO:0005615">
    <property type="term" value="C:extracellular space"/>
    <property type="evidence" value="ECO:0007005"/>
    <property type="project" value="BHF-UCL"/>
</dbReference>
<dbReference type="GO" id="GO:0002043">
    <property type="term" value="P:blood vessel endothelial cell proliferation involved in sprouting angiogenesis"/>
    <property type="evidence" value="ECO:0007669"/>
    <property type="project" value="Ensembl"/>
</dbReference>
<dbReference type="GO" id="GO:0030509">
    <property type="term" value="P:BMP signaling pathway"/>
    <property type="evidence" value="ECO:0000315"/>
    <property type="project" value="MGI"/>
</dbReference>
<dbReference type="GO" id="GO:0042118">
    <property type="term" value="P:endothelial cell activation"/>
    <property type="evidence" value="ECO:0007669"/>
    <property type="project" value="Ensembl"/>
</dbReference>
<dbReference type="GO" id="GO:0048839">
    <property type="term" value="P:inner ear development"/>
    <property type="evidence" value="ECO:0000314"/>
    <property type="project" value="MGI"/>
</dbReference>
<dbReference type="GO" id="GO:0030514">
    <property type="term" value="P:negative regulation of BMP signaling pathway"/>
    <property type="evidence" value="ECO:0000314"/>
    <property type="project" value="MGI"/>
</dbReference>
<dbReference type="GO" id="GO:0070374">
    <property type="term" value="P:positive regulation of ERK1 and ERK2 cascade"/>
    <property type="evidence" value="ECO:0007669"/>
    <property type="project" value="Ensembl"/>
</dbReference>
<dbReference type="GO" id="GO:0060391">
    <property type="term" value="P:positive regulation of SMAD protein signal transduction"/>
    <property type="evidence" value="ECO:0007669"/>
    <property type="project" value="Ensembl"/>
</dbReference>
<dbReference type="GO" id="GO:1903672">
    <property type="term" value="P:positive regulation of sprouting angiogenesis"/>
    <property type="evidence" value="ECO:0007669"/>
    <property type="project" value="Ensembl"/>
</dbReference>
<dbReference type="GO" id="GO:0010594">
    <property type="term" value="P:regulation of endothelial cell migration"/>
    <property type="evidence" value="ECO:0007669"/>
    <property type="project" value="Ensembl"/>
</dbReference>
<dbReference type="GO" id="GO:0032880">
    <property type="term" value="P:regulation of protein localization"/>
    <property type="evidence" value="ECO:0000315"/>
    <property type="project" value="MGI"/>
</dbReference>
<dbReference type="GO" id="GO:0060395">
    <property type="term" value="P:SMAD protein signal transduction"/>
    <property type="evidence" value="ECO:0000315"/>
    <property type="project" value="MGI"/>
</dbReference>
<dbReference type="GO" id="GO:0001657">
    <property type="term" value="P:ureteric bud development"/>
    <property type="evidence" value="ECO:0000270"/>
    <property type="project" value="UniProtKB"/>
</dbReference>
<dbReference type="CDD" id="cd19941">
    <property type="entry name" value="TIL"/>
    <property type="match status" value="1"/>
</dbReference>
<dbReference type="FunFam" id="2.10.70.10:FF:000034">
    <property type="entry name" value="BMP-binding endothelial regulator protein"/>
    <property type="match status" value="1"/>
</dbReference>
<dbReference type="FunFam" id="2.10.25.10:FF:000236">
    <property type="entry name" value="BMP-binding endothelial regulator protein-like"/>
    <property type="match status" value="1"/>
</dbReference>
<dbReference type="FunFam" id="2.10.70.10:FF:000037">
    <property type="entry name" value="BMP-binding endothelial regulator protein-like"/>
    <property type="match status" value="1"/>
</dbReference>
<dbReference type="Gene3D" id="6.20.200.20">
    <property type="match status" value="3"/>
</dbReference>
<dbReference type="Gene3D" id="2.10.70.10">
    <property type="entry name" value="Complement Module, domain 1"/>
    <property type="match status" value="2"/>
</dbReference>
<dbReference type="Gene3D" id="2.10.25.10">
    <property type="entry name" value="Laminin"/>
    <property type="match status" value="1"/>
</dbReference>
<dbReference type="InterPro" id="IPR052424">
    <property type="entry name" value="Kielin_Chordin-BMP_Reg"/>
</dbReference>
<dbReference type="InterPro" id="IPR036084">
    <property type="entry name" value="Ser_inhib-like_sf"/>
</dbReference>
<dbReference type="InterPro" id="IPR002919">
    <property type="entry name" value="TIL_dom"/>
</dbReference>
<dbReference type="InterPro" id="IPR014853">
    <property type="entry name" value="VWF/SSPO/ZAN-like_Cys-rich_dom"/>
</dbReference>
<dbReference type="InterPro" id="IPR001007">
    <property type="entry name" value="VWF_dom"/>
</dbReference>
<dbReference type="InterPro" id="IPR001846">
    <property type="entry name" value="VWF_type-D"/>
</dbReference>
<dbReference type="PANTHER" id="PTHR46698">
    <property type="entry name" value="CROSSVEINLESS 2"/>
    <property type="match status" value="1"/>
</dbReference>
<dbReference type="PANTHER" id="PTHR46698:SF4">
    <property type="entry name" value="CROSSVEINLESS 2"/>
    <property type="match status" value="1"/>
</dbReference>
<dbReference type="Pfam" id="PF08742">
    <property type="entry name" value="C8"/>
    <property type="match status" value="1"/>
</dbReference>
<dbReference type="Pfam" id="PF01826">
    <property type="entry name" value="TIL"/>
    <property type="match status" value="1"/>
</dbReference>
<dbReference type="Pfam" id="PF00093">
    <property type="entry name" value="VWC"/>
    <property type="match status" value="2"/>
</dbReference>
<dbReference type="Pfam" id="PF00094">
    <property type="entry name" value="VWD"/>
    <property type="match status" value="1"/>
</dbReference>
<dbReference type="SMART" id="SM00832">
    <property type="entry name" value="C8"/>
    <property type="match status" value="1"/>
</dbReference>
<dbReference type="SMART" id="SM00214">
    <property type="entry name" value="VWC"/>
    <property type="match status" value="5"/>
</dbReference>
<dbReference type="SMART" id="SM00216">
    <property type="entry name" value="VWD"/>
    <property type="match status" value="1"/>
</dbReference>
<dbReference type="SUPFAM" id="SSF57603">
    <property type="entry name" value="FnI-like domain"/>
    <property type="match status" value="5"/>
</dbReference>
<dbReference type="SUPFAM" id="SSF57567">
    <property type="entry name" value="Serine protease inhibitors"/>
    <property type="match status" value="1"/>
</dbReference>
<dbReference type="PROSITE" id="PS01208">
    <property type="entry name" value="VWFC_1"/>
    <property type="match status" value="3"/>
</dbReference>
<dbReference type="PROSITE" id="PS50184">
    <property type="entry name" value="VWFC_2"/>
    <property type="match status" value="2"/>
</dbReference>
<dbReference type="PROSITE" id="PS51233">
    <property type="entry name" value="VWFD"/>
    <property type="match status" value="1"/>
</dbReference>
<accession>Q8CJ69</accession>
<accession>Q7TN57</accession>
<accession>Q80UZ1</accession>
<accession>Q9CXM8</accession>
<reference key="1">
    <citation type="journal article" date="2002" name="Mech. Dev.">
        <title>Mouse Crossveinless-2 is the vertebrate homolog of a Drosophila extracellular regulator of BMP signaling.</title>
        <authorList>
            <person name="Coffinier C."/>
            <person name="Ketpura N."/>
            <person name="Tran U."/>
            <person name="Geissert D."/>
            <person name="De Robertis E.M."/>
        </authorList>
    </citation>
    <scope>NUCLEOTIDE SEQUENCE [MRNA]</scope>
    <scope>SUBCELLULAR LOCATION</scope>
    <scope>DEVELOPMENTAL STAGE</scope>
    <source>
        <strain>C57BL/6J</strain>
    </source>
</reference>
<reference key="2">
    <citation type="journal article" date="2003" name="Mol. Cell. Biol.">
        <title>BMPER, a novel endothelial cell precursor-derived protein, antagonizes bone morphogenetic protein signaling and endothelial cell differentiation.</title>
        <authorList>
            <person name="Moser M."/>
            <person name="Binder O."/>
            <person name="Wu Y."/>
            <person name="Aitsebaomo J."/>
            <person name="Ren R."/>
            <person name="Bode C."/>
            <person name="Bautch V.L."/>
            <person name="Conlon F.L."/>
            <person name="Patterson C."/>
        </authorList>
    </citation>
    <scope>NUCLEOTIDE SEQUENCE [MRNA]</scope>
    <scope>INTERACTION WITH BMP4</scope>
    <source>
        <strain>Swiss Webster</strain>
    </source>
</reference>
<reference key="3">
    <citation type="journal article" date="2004" name="Genome Res.">
        <title>The status, quality, and expansion of the NIH full-length cDNA project: the Mammalian Gene Collection (MGC).</title>
        <authorList>
            <consortium name="The MGC Project Team"/>
        </authorList>
    </citation>
    <scope>NUCLEOTIDE SEQUENCE [LARGE SCALE MRNA]</scope>
    <source>
        <strain>CD-1</strain>
        <tissue>Mammary tumor</tissue>
        <tissue>Neural stem cell</tissue>
    </source>
</reference>
<reference key="4">
    <citation type="journal article" date="2005" name="Science">
        <title>The transcriptional landscape of the mammalian genome.</title>
        <authorList>
            <person name="Carninci P."/>
            <person name="Kasukawa T."/>
            <person name="Katayama S."/>
            <person name="Gough J."/>
            <person name="Frith M.C."/>
            <person name="Maeda N."/>
            <person name="Oyama R."/>
            <person name="Ravasi T."/>
            <person name="Lenhard B."/>
            <person name="Wells C."/>
            <person name="Kodzius R."/>
            <person name="Shimokawa K."/>
            <person name="Bajic V.B."/>
            <person name="Brenner S.E."/>
            <person name="Batalov S."/>
            <person name="Forrest A.R."/>
            <person name="Zavolan M."/>
            <person name="Davis M.J."/>
            <person name="Wilming L.G."/>
            <person name="Aidinis V."/>
            <person name="Allen J.E."/>
            <person name="Ambesi-Impiombato A."/>
            <person name="Apweiler R."/>
            <person name="Aturaliya R.N."/>
            <person name="Bailey T.L."/>
            <person name="Bansal M."/>
            <person name="Baxter L."/>
            <person name="Beisel K.W."/>
            <person name="Bersano T."/>
            <person name="Bono H."/>
            <person name="Chalk A.M."/>
            <person name="Chiu K.P."/>
            <person name="Choudhary V."/>
            <person name="Christoffels A."/>
            <person name="Clutterbuck D.R."/>
            <person name="Crowe M.L."/>
            <person name="Dalla E."/>
            <person name="Dalrymple B.P."/>
            <person name="de Bono B."/>
            <person name="Della Gatta G."/>
            <person name="di Bernardo D."/>
            <person name="Down T."/>
            <person name="Engstrom P."/>
            <person name="Fagiolini M."/>
            <person name="Faulkner G."/>
            <person name="Fletcher C.F."/>
            <person name="Fukushima T."/>
            <person name="Furuno M."/>
            <person name="Futaki S."/>
            <person name="Gariboldi M."/>
            <person name="Georgii-Hemming P."/>
            <person name="Gingeras T.R."/>
            <person name="Gojobori T."/>
            <person name="Green R.E."/>
            <person name="Gustincich S."/>
            <person name="Harbers M."/>
            <person name="Hayashi Y."/>
            <person name="Hensch T.K."/>
            <person name="Hirokawa N."/>
            <person name="Hill D."/>
            <person name="Huminiecki L."/>
            <person name="Iacono M."/>
            <person name="Ikeo K."/>
            <person name="Iwama A."/>
            <person name="Ishikawa T."/>
            <person name="Jakt M."/>
            <person name="Kanapin A."/>
            <person name="Katoh M."/>
            <person name="Kawasawa Y."/>
            <person name="Kelso J."/>
            <person name="Kitamura H."/>
            <person name="Kitano H."/>
            <person name="Kollias G."/>
            <person name="Krishnan S.P."/>
            <person name="Kruger A."/>
            <person name="Kummerfeld S.K."/>
            <person name="Kurochkin I.V."/>
            <person name="Lareau L.F."/>
            <person name="Lazarevic D."/>
            <person name="Lipovich L."/>
            <person name="Liu J."/>
            <person name="Liuni S."/>
            <person name="McWilliam S."/>
            <person name="Madan Babu M."/>
            <person name="Madera M."/>
            <person name="Marchionni L."/>
            <person name="Matsuda H."/>
            <person name="Matsuzawa S."/>
            <person name="Miki H."/>
            <person name="Mignone F."/>
            <person name="Miyake S."/>
            <person name="Morris K."/>
            <person name="Mottagui-Tabar S."/>
            <person name="Mulder N."/>
            <person name="Nakano N."/>
            <person name="Nakauchi H."/>
            <person name="Ng P."/>
            <person name="Nilsson R."/>
            <person name="Nishiguchi S."/>
            <person name="Nishikawa S."/>
            <person name="Nori F."/>
            <person name="Ohara O."/>
            <person name="Okazaki Y."/>
            <person name="Orlando V."/>
            <person name="Pang K.C."/>
            <person name="Pavan W.J."/>
            <person name="Pavesi G."/>
            <person name="Pesole G."/>
            <person name="Petrovsky N."/>
            <person name="Piazza S."/>
            <person name="Reed J."/>
            <person name="Reid J.F."/>
            <person name="Ring B.Z."/>
            <person name="Ringwald M."/>
            <person name="Rost B."/>
            <person name="Ruan Y."/>
            <person name="Salzberg S.L."/>
            <person name="Sandelin A."/>
            <person name="Schneider C."/>
            <person name="Schoenbach C."/>
            <person name="Sekiguchi K."/>
            <person name="Semple C.A."/>
            <person name="Seno S."/>
            <person name="Sessa L."/>
            <person name="Sheng Y."/>
            <person name="Shibata Y."/>
            <person name="Shimada H."/>
            <person name="Shimada K."/>
            <person name="Silva D."/>
            <person name="Sinclair B."/>
            <person name="Sperling S."/>
            <person name="Stupka E."/>
            <person name="Sugiura K."/>
            <person name="Sultana R."/>
            <person name="Takenaka Y."/>
            <person name="Taki K."/>
            <person name="Tammoja K."/>
            <person name="Tan S.L."/>
            <person name="Tang S."/>
            <person name="Taylor M.S."/>
            <person name="Tegner J."/>
            <person name="Teichmann S.A."/>
            <person name="Ueda H.R."/>
            <person name="van Nimwegen E."/>
            <person name="Verardo R."/>
            <person name="Wei C.L."/>
            <person name="Yagi K."/>
            <person name="Yamanishi H."/>
            <person name="Zabarovsky E."/>
            <person name="Zhu S."/>
            <person name="Zimmer A."/>
            <person name="Hide W."/>
            <person name="Bult C."/>
            <person name="Grimmond S.M."/>
            <person name="Teasdale R.D."/>
            <person name="Liu E.T."/>
            <person name="Brusic V."/>
            <person name="Quackenbush J."/>
            <person name="Wahlestedt C."/>
            <person name="Mattick J.S."/>
            <person name="Hume D.A."/>
            <person name="Kai C."/>
            <person name="Sasaki D."/>
            <person name="Tomaru Y."/>
            <person name="Fukuda S."/>
            <person name="Kanamori-Katayama M."/>
            <person name="Suzuki M."/>
            <person name="Aoki J."/>
            <person name="Arakawa T."/>
            <person name="Iida J."/>
            <person name="Imamura K."/>
            <person name="Itoh M."/>
            <person name="Kato T."/>
            <person name="Kawaji H."/>
            <person name="Kawagashira N."/>
            <person name="Kawashima T."/>
            <person name="Kojima M."/>
            <person name="Kondo S."/>
            <person name="Konno H."/>
            <person name="Nakano K."/>
            <person name="Ninomiya N."/>
            <person name="Nishio T."/>
            <person name="Okada M."/>
            <person name="Plessy C."/>
            <person name="Shibata K."/>
            <person name="Shiraki T."/>
            <person name="Suzuki S."/>
            <person name="Tagami M."/>
            <person name="Waki K."/>
            <person name="Watahiki A."/>
            <person name="Okamura-Oho Y."/>
            <person name="Suzuki H."/>
            <person name="Kawai J."/>
            <person name="Hayashizaki Y."/>
        </authorList>
    </citation>
    <scope>NUCLEOTIDE SEQUENCE [LARGE SCALE MRNA] OF 224-685</scope>
    <source>
        <strain>C57BL/6J</strain>
        <tissue>Embryo</tissue>
    </source>
</reference>
<evidence type="ECO:0000250" key="1"/>
<evidence type="ECO:0000255" key="2"/>
<evidence type="ECO:0000255" key="3">
    <source>
        <dbReference type="PROSITE-ProRule" id="PRU00220"/>
    </source>
</evidence>
<evidence type="ECO:0000255" key="4">
    <source>
        <dbReference type="PROSITE-ProRule" id="PRU00580"/>
    </source>
</evidence>
<evidence type="ECO:0000269" key="5">
    <source>
    </source>
</evidence>
<evidence type="ECO:0000269" key="6">
    <source>
    </source>
</evidence>
<evidence type="ECO:0000305" key="7"/>
<gene>
    <name type="primary">Bmper</name>
    <name type="synonym">Cv2</name>
</gene>
<organism>
    <name type="scientific">Mus musculus</name>
    <name type="common">Mouse</name>
    <dbReference type="NCBI Taxonomy" id="10090"/>
    <lineage>
        <taxon>Eukaryota</taxon>
        <taxon>Metazoa</taxon>
        <taxon>Chordata</taxon>
        <taxon>Craniata</taxon>
        <taxon>Vertebrata</taxon>
        <taxon>Euteleostomi</taxon>
        <taxon>Mammalia</taxon>
        <taxon>Eutheria</taxon>
        <taxon>Euarchontoglires</taxon>
        <taxon>Glires</taxon>
        <taxon>Rodentia</taxon>
        <taxon>Myomorpha</taxon>
        <taxon>Muroidea</taxon>
        <taxon>Muridae</taxon>
        <taxon>Murinae</taxon>
        <taxon>Mus</taxon>
        <taxon>Mus</taxon>
    </lineage>
</organism>
<sequence length="685" mass="76148">MLWFFSVRALAERPCRRSPGITCCVLLLLNCSGVPMSLASSFLTGSVAKCENEGEVLQIPFITDNPCIMCVCLNKEVTCKREKCPVLSRDCALAIKQRGACCERCKGCTHEGRTYNSSFKWQTPAEPCVLRQCQEGVVTESEVRCVVHCKNPAEHQGACCPTCPGCVFEGVQYREGEEFQPEGNKCITCSCVGGRTQCVREVCPILSCPQHLSHTPSGQCCPKCLGQRKVFDLPFGSCLFRSDVYDNGASFVYDNCTVCTCKDSTMVCKKKCSHPGVCNSDEDACCEDCLLRVPPEDIKVCKFGSKIFRDGEMWSSVNCSICACVKGKTECRKKQCVPVSSCPQGKILNRKGCCPICTEKPGVCTVFGDPHYNTFDGRTFNFQGTCQYVLTKDCSSPASPFQVLVKNDARRTRSFSWTKSVELMLGESTVSLQQHLTVRWNGSRIALPCHTPHFHIDLDGYLLKVTTRAGLEISWDGDSFVEVMAAPHLKGKLCGLCGNYNGHKRDDLIGGDGNFKFDVDDFAESWRVESNEFCNRPQRKPVPELCQGTVKVKLRAHRECQKLKSWEFQTCHSTVDYTTFYRSCVTDMCECPVHKNCYCESFLAYTRACQREGIKVHWEPQQSCAATQCKHGAVYDTCGPGCVKTCDNWNEIGPCNKPCIAGCHCPANLVLHKGRCIKPVLCPQR</sequence>